<evidence type="ECO:0000250" key="1"/>
<evidence type="ECO:0000255" key="2"/>
<evidence type="ECO:0000305" key="3"/>
<reference key="1">
    <citation type="journal article" date="2001" name="Nature">
        <title>Complete genome sequence of Salmonella enterica serovar Typhimurium LT2.</title>
        <authorList>
            <person name="McClelland M."/>
            <person name="Sanderson K.E."/>
            <person name="Spieth J."/>
            <person name="Clifton S.W."/>
            <person name="Latreille P."/>
            <person name="Courtney L."/>
            <person name="Porwollik S."/>
            <person name="Ali J."/>
            <person name="Dante M."/>
            <person name="Du F."/>
            <person name="Hou S."/>
            <person name="Layman D."/>
            <person name="Leonard S."/>
            <person name="Nguyen C."/>
            <person name="Scott K."/>
            <person name="Holmes A."/>
            <person name="Grewal N."/>
            <person name="Mulvaney E."/>
            <person name="Ryan E."/>
            <person name="Sun H."/>
            <person name="Florea L."/>
            <person name="Miller W."/>
            <person name="Stoneking T."/>
            <person name="Nhan M."/>
            <person name="Waterston R."/>
            <person name="Wilson R.K."/>
        </authorList>
    </citation>
    <scope>NUCLEOTIDE SEQUENCE [LARGE SCALE GENOMIC DNA]</scope>
    <source>
        <strain>LT2 / SGSC1412 / ATCC 700720</strain>
    </source>
</reference>
<reference key="2">
    <citation type="journal article" date="1998" name="Infect. Immun.">
        <title>Molecular and functional characterization of Salmonella enterica serovar typhimurium poxA gene: effect on attenuation of virulence and protection.</title>
        <authorList>
            <person name="Kaniga K."/>
            <person name="Compton M.S."/>
            <person name="Curtiss R. III"/>
            <person name="Sundaram P."/>
        </authorList>
    </citation>
    <scope>NUCLEOTIDE SEQUENCE [GENOMIC DNA] OF 1-153</scope>
    <source>
        <strain>UK-1</strain>
    </source>
</reference>
<feature type="chain" id="PRO_0000213048" description="Inner membrane transporter YjeM">
    <location>
        <begin position="1"/>
        <end position="500"/>
    </location>
</feature>
<feature type="topological domain" description="Cytoplasmic" evidence="2">
    <location>
        <begin position="1"/>
        <end position="10"/>
    </location>
</feature>
<feature type="transmembrane region" description="Helical" evidence="2">
    <location>
        <begin position="11"/>
        <end position="31"/>
    </location>
</feature>
<feature type="topological domain" description="Periplasmic" evidence="2">
    <location>
        <begin position="32"/>
        <end position="37"/>
    </location>
</feature>
<feature type="transmembrane region" description="Helical" evidence="2">
    <location>
        <begin position="38"/>
        <end position="58"/>
    </location>
</feature>
<feature type="topological domain" description="Cytoplasmic" evidence="2">
    <location>
        <begin position="59"/>
        <end position="83"/>
    </location>
</feature>
<feature type="transmembrane region" description="Helical" evidence="2">
    <location>
        <begin position="84"/>
        <end position="104"/>
    </location>
</feature>
<feature type="topological domain" description="Periplasmic" evidence="2">
    <location>
        <begin position="105"/>
        <end position="124"/>
    </location>
</feature>
<feature type="transmembrane region" description="Helical" evidence="2">
    <location>
        <begin position="125"/>
        <end position="145"/>
    </location>
</feature>
<feature type="topological domain" description="Cytoplasmic" evidence="2">
    <location>
        <begin position="146"/>
        <end position="163"/>
    </location>
</feature>
<feature type="transmembrane region" description="Helical" evidence="2">
    <location>
        <begin position="164"/>
        <end position="184"/>
    </location>
</feature>
<feature type="topological domain" description="Periplasmic" evidence="2">
    <location>
        <begin position="185"/>
        <end position="209"/>
    </location>
</feature>
<feature type="transmembrane region" description="Helical" evidence="2">
    <location>
        <begin position="210"/>
        <end position="230"/>
    </location>
</feature>
<feature type="topological domain" description="Cytoplasmic" evidence="2">
    <location>
        <begin position="231"/>
        <end position="243"/>
    </location>
</feature>
<feature type="transmembrane region" description="Helical" evidence="2">
    <location>
        <begin position="244"/>
        <end position="264"/>
    </location>
</feature>
<feature type="topological domain" description="Periplasmic" evidence="2">
    <location>
        <begin position="265"/>
        <end position="308"/>
    </location>
</feature>
<feature type="transmembrane region" description="Helical" evidence="2">
    <location>
        <begin position="309"/>
        <end position="329"/>
    </location>
</feature>
<feature type="topological domain" description="Cytoplasmic" evidence="2">
    <location>
        <begin position="330"/>
        <end position="361"/>
    </location>
</feature>
<feature type="transmembrane region" description="Helical" evidence="2">
    <location>
        <begin position="362"/>
        <end position="382"/>
    </location>
</feature>
<feature type="topological domain" description="Periplasmic" evidence="2">
    <location>
        <begin position="383"/>
        <end position="394"/>
    </location>
</feature>
<feature type="transmembrane region" description="Helical" evidence="2">
    <location>
        <begin position="395"/>
        <end position="415"/>
    </location>
</feature>
<feature type="topological domain" description="Cytoplasmic" evidence="2">
    <location>
        <begin position="416"/>
        <end position="433"/>
    </location>
</feature>
<feature type="transmembrane region" description="Helical" evidence="2">
    <location>
        <begin position="434"/>
        <end position="454"/>
    </location>
</feature>
<feature type="topological domain" description="Periplasmic" evidence="2">
    <location>
        <begin position="455"/>
        <end position="462"/>
    </location>
</feature>
<feature type="transmembrane region" description="Helical" evidence="2">
    <location>
        <begin position="463"/>
        <end position="483"/>
    </location>
</feature>
<feature type="topological domain" description="Cytoplasmic" evidence="2">
    <location>
        <begin position="484"/>
        <end position="500"/>
    </location>
</feature>
<feature type="sequence conflict" description="In Ref. 2; AAC82541." evidence="3" ref="2">
    <original>R</original>
    <variation>P</variation>
    <location>
        <position position="65"/>
    </location>
</feature>
<feature type="sequence conflict" description="In Ref. 2; AAC82541." evidence="3" ref="2">
    <original>A</original>
    <variation>P</variation>
    <location>
        <position position="117"/>
    </location>
</feature>
<feature type="sequence conflict" description="In Ref. 2; AAC82541." evidence="3" ref="2">
    <original>I</original>
    <variation>N</variation>
    <location>
        <position position="143"/>
    </location>
</feature>
<name>YJEM_SALTY</name>
<gene>
    <name type="primary">yjeM</name>
    <name type="ordered locus">STM4345</name>
</gene>
<sequence>MTHTIKKMSLIGLILMIFTSVFGFANSPSAFYLMGYSAIPWYIFSALLFFIPFALMMAEMGSAYRKEEGGIYSWMNNSVGPRYAFIGTFMWFSSYVIWMVSTAAKIWVPFSTFVFGADMTQHWRIAGLEPTQVVGLLAVGWMILVTCVAARGINKIARITAVGGIAVMCLNLVLLLVSVAILLLNGGHFAQEINFTSSPNPGYHSGLAMLSFVVFAIFAYGGIEAVGGLVDKTEKPEKNFAKGIVFAAIVISIGYSLAIFLWGVSTNWQQILSNSAVNLGNITYILMSSLGTTLGNALNLSPEAAMTVGVWFARITGLSMFLAYTGAFFTLSYSPLKAIIQGTPKALWPAPMTTLNANGMPATAMWLQCVLVSLFILLVSFGGDTASAFYNKLTLMANVSMTLPYLFLALAFPFFKARQDLERPFVLFKTKASTLVATGVVVLVVTFANVFTIIQPVIEAGDWDSALWMIGGPIFFSLLAMAIYQNYSSRMSADPEWAAE</sequence>
<protein>
    <recommendedName>
        <fullName>Inner membrane transporter YjeM</fullName>
    </recommendedName>
</protein>
<organism>
    <name type="scientific">Salmonella typhimurium (strain LT2 / SGSC1412 / ATCC 700720)</name>
    <dbReference type="NCBI Taxonomy" id="99287"/>
    <lineage>
        <taxon>Bacteria</taxon>
        <taxon>Pseudomonadati</taxon>
        <taxon>Pseudomonadota</taxon>
        <taxon>Gammaproteobacteria</taxon>
        <taxon>Enterobacterales</taxon>
        <taxon>Enterobacteriaceae</taxon>
        <taxon>Salmonella</taxon>
    </lineage>
</organism>
<dbReference type="EMBL" id="AE006468">
    <property type="protein sequence ID" value="AAL23168.1"/>
    <property type="molecule type" value="Genomic_DNA"/>
</dbReference>
<dbReference type="EMBL" id="AF001831">
    <property type="protein sequence ID" value="AAC82541.1"/>
    <property type="molecule type" value="Genomic_DNA"/>
</dbReference>
<dbReference type="RefSeq" id="NP_463209.1">
    <property type="nucleotide sequence ID" value="NC_003197.2"/>
</dbReference>
<dbReference type="RefSeq" id="WP_000149876.1">
    <property type="nucleotide sequence ID" value="NC_003197.2"/>
</dbReference>
<dbReference type="SMR" id="P0A2N4"/>
<dbReference type="STRING" id="99287.STM4345"/>
<dbReference type="PaxDb" id="99287-STM4345"/>
<dbReference type="GeneID" id="1255871"/>
<dbReference type="KEGG" id="stm:STM4345"/>
<dbReference type="PATRIC" id="fig|99287.12.peg.4572"/>
<dbReference type="HOGENOM" id="CLU_020854_2_1_6"/>
<dbReference type="OMA" id="FMWFASY"/>
<dbReference type="PhylomeDB" id="P0A2N4"/>
<dbReference type="BioCyc" id="SENT99287:STM4345-MONOMER"/>
<dbReference type="Proteomes" id="UP000001014">
    <property type="component" value="Chromosome"/>
</dbReference>
<dbReference type="GO" id="GO:0005886">
    <property type="term" value="C:plasma membrane"/>
    <property type="evidence" value="ECO:0007669"/>
    <property type="project" value="UniProtKB-SubCell"/>
</dbReference>
<dbReference type="GO" id="GO:0015171">
    <property type="term" value="F:amino acid transmembrane transporter activity"/>
    <property type="evidence" value="ECO:0000318"/>
    <property type="project" value="GO_Central"/>
</dbReference>
<dbReference type="GO" id="GO:0006865">
    <property type="term" value="P:amino acid transport"/>
    <property type="evidence" value="ECO:0000318"/>
    <property type="project" value="GO_Central"/>
</dbReference>
<dbReference type="Gene3D" id="1.20.1740.10">
    <property type="entry name" value="Amino acid/polyamine transporter I"/>
    <property type="match status" value="1"/>
</dbReference>
<dbReference type="InterPro" id="IPR002293">
    <property type="entry name" value="AA/rel_permease1"/>
</dbReference>
<dbReference type="InterPro" id="IPR050367">
    <property type="entry name" value="APC_superfamily"/>
</dbReference>
<dbReference type="NCBIfam" id="NF011775">
    <property type="entry name" value="PRK15238.1"/>
    <property type="match status" value="1"/>
</dbReference>
<dbReference type="PANTHER" id="PTHR42770">
    <property type="entry name" value="AMINO ACID TRANSPORTER-RELATED"/>
    <property type="match status" value="1"/>
</dbReference>
<dbReference type="PANTHER" id="PTHR42770:SF15">
    <property type="entry name" value="GLUTAMATE_GAMMA-AMINOBUTYRATE ANTIPORTER-RELATED"/>
    <property type="match status" value="1"/>
</dbReference>
<dbReference type="Pfam" id="PF13520">
    <property type="entry name" value="AA_permease_2"/>
    <property type="match status" value="1"/>
</dbReference>
<dbReference type="PIRSF" id="PIRSF006060">
    <property type="entry name" value="AA_transporter"/>
    <property type="match status" value="1"/>
</dbReference>
<proteinExistence type="inferred from homology"/>
<comment type="subcellular location">
    <subcellularLocation>
        <location evidence="1">Cell inner membrane</location>
        <topology evidence="1">Multi-pass membrane protein</topology>
    </subcellularLocation>
</comment>
<comment type="similarity">
    <text evidence="3">Belongs to the amino acid-polyamine-organocation (APC) superfamily.</text>
</comment>
<keyword id="KW-0997">Cell inner membrane</keyword>
<keyword id="KW-1003">Cell membrane</keyword>
<keyword id="KW-0472">Membrane</keyword>
<keyword id="KW-1185">Reference proteome</keyword>
<keyword id="KW-0812">Transmembrane</keyword>
<keyword id="KW-1133">Transmembrane helix</keyword>
<keyword id="KW-0813">Transport</keyword>
<accession>P0A2N4</accession>
<accession>Q9ZJ11</accession>